<accession>Q9IB61</accession>
<dbReference type="EMBL" id="AB038320">
    <property type="protein sequence ID" value="BAA90823.1"/>
    <property type="molecule type" value="mRNA"/>
</dbReference>
<dbReference type="EMBL" id="BC059585">
    <property type="protein sequence ID" value="AAH59585.1"/>
    <property type="molecule type" value="mRNA"/>
</dbReference>
<dbReference type="RefSeq" id="NP_571568.1">
    <property type="nucleotide sequence ID" value="NM_131493.2"/>
</dbReference>
<dbReference type="FunCoup" id="Q9IB61">
    <property type="interactions" value="643"/>
</dbReference>
<dbReference type="STRING" id="7955.ENSDARP00000068337"/>
<dbReference type="PaxDb" id="7955-ENSDARP00000068337"/>
<dbReference type="Ensembl" id="ENSDART00000073847">
    <property type="protein sequence ID" value="ENSDARP00000068337"/>
    <property type="gene ID" value="ENSDARG00000052073"/>
</dbReference>
<dbReference type="GeneID" id="57918"/>
<dbReference type="KEGG" id="dre:57918"/>
<dbReference type="AGR" id="ZFIN:ZDB-GENE-000330-7"/>
<dbReference type="CTD" id="10904"/>
<dbReference type="ZFIN" id="ZDB-GENE-000330-7">
    <property type="gene designation" value="blcap"/>
</dbReference>
<dbReference type="eggNOG" id="KOG4489">
    <property type="taxonomic scope" value="Eukaryota"/>
</dbReference>
<dbReference type="HOGENOM" id="CLU_181908_0_0_1"/>
<dbReference type="InParanoid" id="Q9IB61"/>
<dbReference type="OMA" id="FLLCYSC"/>
<dbReference type="OrthoDB" id="5772623at2759"/>
<dbReference type="PhylomeDB" id="Q9IB61"/>
<dbReference type="TreeFam" id="TF313306"/>
<dbReference type="PRO" id="PR:Q9IB61"/>
<dbReference type="Proteomes" id="UP000000437">
    <property type="component" value="Chromosome 6"/>
</dbReference>
<dbReference type="Bgee" id="ENSDARG00000052073">
    <property type="expression patterns" value="Expressed in mature ovarian follicle and 30 other cell types or tissues"/>
</dbReference>
<dbReference type="GO" id="GO:0005737">
    <property type="term" value="C:cytoplasm"/>
    <property type="evidence" value="ECO:0007669"/>
    <property type="project" value="UniProtKB-SubCell"/>
</dbReference>
<dbReference type="GO" id="GO:0016020">
    <property type="term" value="C:membrane"/>
    <property type="evidence" value="ECO:0007669"/>
    <property type="project" value="UniProtKB-SubCell"/>
</dbReference>
<dbReference type="GO" id="GO:0005634">
    <property type="term" value="C:nucleus"/>
    <property type="evidence" value="ECO:0007669"/>
    <property type="project" value="UniProtKB-SubCell"/>
</dbReference>
<dbReference type="InterPro" id="IPR009598">
    <property type="entry name" value="BCALP"/>
</dbReference>
<dbReference type="PANTHER" id="PTHR13259">
    <property type="entry name" value="BLADDER CANCER 10 KD PROTEIN HOMOLOG"/>
    <property type="match status" value="1"/>
</dbReference>
<dbReference type="PANTHER" id="PTHR13259:SF1">
    <property type="entry name" value="BLADDER CANCER-ASSOCIATED PROTEIN"/>
    <property type="match status" value="1"/>
</dbReference>
<dbReference type="Pfam" id="PF06726">
    <property type="entry name" value="BC10"/>
    <property type="match status" value="1"/>
</dbReference>
<dbReference type="SMART" id="SM01396">
    <property type="entry name" value="BC10"/>
    <property type="match status" value="1"/>
</dbReference>
<reference key="1">
    <citation type="submission" date="2000-02" db="EMBL/GenBank/DDBJ databases">
        <title>Identification of zfBc10, a zebrafish ortholog of human BC10.</title>
        <authorList>
            <person name="Hahn Y."/>
            <person name="Chung J.H."/>
        </authorList>
    </citation>
    <scope>NUCLEOTIDE SEQUENCE [MRNA]</scope>
</reference>
<reference key="2">
    <citation type="submission" date="2003-10" db="EMBL/GenBank/DDBJ databases">
        <authorList>
            <consortium name="NIH - Zebrafish Gene Collection (ZGC) project"/>
        </authorList>
    </citation>
    <scope>NUCLEOTIDE SEQUENCE [LARGE SCALE MRNA]</scope>
    <source>
        <tissue>Retina</tissue>
    </source>
</reference>
<feature type="chain" id="PRO_0000295135" description="Apoptosis inducing factor BLCAP">
    <location>
        <begin position="1"/>
        <end position="87"/>
    </location>
</feature>
<feature type="transmembrane region" description="Helical" evidence="2">
    <location>
        <begin position="19"/>
        <end position="39"/>
    </location>
</feature>
<feature type="transmembrane region" description="Helical" evidence="2">
    <location>
        <begin position="43"/>
        <end position="63"/>
    </location>
</feature>
<evidence type="ECO:0000250" key="1">
    <source>
        <dbReference type="UniProtKB" id="P62952"/>
    </source>
</evidence>
<evidence type="ECO:0000255" key="2"/>
<evidence type="ECO:0000305" key="3"/>
<sequence length="87" mass="9983">MYCLQWLLPVLLIPKPLNPALWFNHSMFMGFYLLSFLLERKPCTICALVFLAALFLICYSCWGNCFLYHCHDSPLPDSAHDPSIVGT</sequence>
<organism>
    <name type="scientific">Danio rerio</name>
    <name type="common">Zebrafish</name>
    <name type="synonym">Brachydanio rerio</name>
    <dbReference type="NCBI Taxonomy" id="7955"/>
    <lineage>
        <taxon>Eukaryota</taxon>
        <taxon>Metazoa</taxon>
        <taxon>Chordata</taxon>
        <taxon>Craniata</taxon>
        <taxon>Vertebrata</taxon>
        <taxon>Euteleostomi</taxon>
        <taxon>Actinopterygii</taxon>
        <taxon>Neopterygii</taxon>
        <taxon>Teleostei</taxon>
        <taxon>Ostariophysi</taxon>
        <taxon>Cypriniformes</taxon>
        <taxon>Danionidae</taxon>
        <taxon>Danioninae</taxon>
        <taxon>Danio</taxon>
    </lineage>
</organism>
<proteinExistence type="inferred from homology"/>
<protein>
    <recommendedName>
        <fullName evidence="3">Apoptosis inducing factor BLCAP</fullName>
    </recommendedName>
    <alternativeName>
        <fullName>Bladder cancer-associated protein</fullName>
    </alternativeName>
    <alternativeName>
        <fullName>ZfBc10</fullName>
    </alternativeName>
</protein>
<comment type="function">
    <text evidence="1">Acts as a tumor suppressor; induces growth arrest at G(1)/S checkpoint and apoptosis via RB1-dependent and p53/TP53- and NF-kappa-B-independent mechanisms. Modulates expression of genes involved in the regulation of proliferation, cell cycle and apoptosis.</text>
</comment>
<comment type="subcellular location">
    <subcellularLocation>
        <location evidence="1">Cytoplasm</location>
    </subcellularLocation>
    <subcellularLocation>
        <location evidence="1">Nucleus</location>
    </subcellularLocation>
    <subcellularLocation>
        <location evidence="2">Membrane</location>
        <topology evidence="2">Multi-pass membrane protein</topology>
    </subcellularLocation>
</comment>
<comment type="similarity">
    <text evidence="3">Belongs to the BLCAP family.</text>
</comment>
<name>BLCAP_DANRE</name>
<gene>
    <name type="primary">blcap</name>
    <name type="ORF">zgc:73246</name>
</gene>
<keyword id="KW-0963">Cytoplasm</keyword>
<keyword id="KW-0472">Membrane</keyword>
<keyword id="KW-0539">Nucleus</keyword>
<keyword id="KW-1185">Reference proteome</keyword>
<keyword id="KW-0812">Transmembrane</keyword>
<keyword id="KW-1133">Transmembrane helix</keyword>
<keyword id="KW-0043">Tumor suppressor</keyword>